<reference key="1">
    <citation type="journal article" date="1998" name="Mol. Cell. Biol.">
        <title>A conserved p38 mitogen-activated protein kinase pathway regulates Drosophila immunity gene expression.</title>
        <authorList>
            <person name="Han Z.S."/>
            <person name="Enslen H."/>
            <person name="Hu X."/>
            <person name="Meng X."/>
            <person name="Wu I.-H."/>
            <person name="Barrett T."/>
            <person name="Davis R.J."/>
            <person name="Ip Y.T."/>
        </authorList>
    </citation>
    <scope>NUCLEOTIDE SEQUENCE [MRNA]</scope>
    <scope>FUNCTION</scope>
    <scope>ACTIVITY REGULATION</scope>
    <source>
        <tissue>Embryo</tissue>
    </source>
</reference>
<reference key="2">
    <citation type="journal article" date="1999" name="Mol. Cell. Biol.">
        <title>p38 mitogen-activated protein kinase can be involved in transforming growth factor beta superfamily signal transduction in Drosophila wing morphogenesis.</title>
        <authorList>
            <person name="Adachi-Yamada T."/>
            <person name="Nakamura M."/>
            <person name="Irie K."/>
            <person name="Tomoyasu Y."/>
            <person name="Sano Y."/>
            <person name="Mori E."/>
            <person name="Goto S."/>
            <person name="Ueno N."/>
            <person name="Nishida Y."/>
            <person name="Matsumoto K."/>
        </authorList>
    </citation>
    <scope>NUCLEOTIDE SEQUENCE [MRNA]</scope>
    <scope>FUNCTION</scope>
    <source>
        <tissue>Imaginal disk</tissue>
    </source>
</reference>
<reference key="3">
    <citation type="journal article" date="1999" name="Genetics">
        <title>An exploration of the sequence of a 2.9-Mb region of the genome of Drosophila melanogaster: the Adh region.</title>
        <authorList>
            <person name="Ashburner M."/>
            <person name="Misra S."/>
            <person name="Roote J."/>
            <person name="Lewis S.E."/>
            <person name="Blazej R.G."/>
            <person name="Davis T."/>
            <person name="Doyle C."/>
            <person name="Galle R.F."/>
            <person name="George R.A."/>
            <person name="Harris N.L."/>
            <person name="Hartzell G."/>
            <person name="Harvey D.A."/>
            <person name="Hong L."/>
            <person name="Houston K.A."/>
            <person name="Hoskins R.A."/>
            <person name="Johnson G."/>
            <person name="Martin C."/>
            <person name="Moshrefi A.R."/>
            <person name="Palazzolo M."/>
            <person name="Reese M.G."/>
            <person name="Spradling A.C."/>
            <person name="Tsang G."/>
            <person name="Wan K.H."/>
            <person name="Whitelaw K."/>
            <person name="Celniker S.E."/>
            <person name="Rubin G.M."/>
        </authorList>
    </citation>
    <scope>NUCLEOTIDE SEQUENCE [LARGE SCALE GENOMIC DNA]</scope>
    <source>
        <strain>Berkeley</strain>
    </source>
</reference>
<reference key="4">
    <citation type="journal article" date="2000" name="Science">
        <title>The genome sequence of Drosophila melanogaster.</title>
        <authorList>
            <person name="Adams M.D."/>
            <person name="Celniker S.E."/>
            <person name="Holt R.A."/>
            <person name="Evans C.A."/>
            <person name="Gocayne J.D."/>
            <person name="Amanatides P.G."/>
            <person name="Scherer S.E."/>
            <person name="Li P.W."/>
            <person name="Hoskins R.A."/>
            <person name="Galle R.F."/>
            <person name="George R.A."/>
            <person name="Lewis S.E."/>
            <person name="Richards S."/>
            <person name="Ashburner M."/>
            <person name="Henderson S.N."/>
            <person name="Sutton G.G."/>
            <person name="Wortman J.R."/>
            <person name="Yandell M.D."/>
            <person name="Zhang Q."/>
            <person name="Chen L.X."/>
            <person name="Brandon R.C."/>
            <person name="Rogers Y.-H.C."/>
            <person name="Blazej R.G."/>
            <person name="Champe M."/>
            <person name="Pfeiffer B.D."/>
            <person name="Wan K.H."/>
            <person name="Doyle C."/>
            <person name="Baxter E.G."/>
            <person name="Helt G."/>
            <person name="Nelson C.R."/>
            <person name="Miklos G.L.G."/>
            <person name="Abril J.F."/>
            <person name="Agbayani A."/>
            <person name="An H.-J."/>
            <person name="Andrews-Pfannkoch C."/>
            <person name="Baldwin D."/>
            <person name="Ballew R.M."/>
            <person name="Basu A."/>
            <person name="Baxendale J."/>
            <person name="Bayraktaroglu L."/>
            <person name="Beasley E.M."/>
            <person name="Beeson K.Y."/>
            <person name="Benos P.V."/>
            <person name="Berman B.P."/>
            <person name="Bhandari D."/>
            <person name="Bolshakov S."/>
            <person name="Borkova D."/>
            <person name="Botchan M.R."/>
            <person name="Bouck J."/>
            <person name="Brokstein P."/>
            <person name="Brottier P."/>
            <person name="Burtis K.C."/>
            <person name="Busam D.A."/>
            <person name="Butler H."/>
            <person name="Cadieu E."/>
            <person name="Center A."/>
            <person name="Chandra I."/>
            <person name="Cherry J.M."/>
            <person name="Cawley S."/>
            <person name="Dahlke C."/>
            <person name="Davenport L.B."/>
            <person name="Davies P."/>
            <person name="de Pablos B."/>
            <person name="Delcher A."/>
            <person name="Deng Z."/>
            <person name="Mays A.D."/>
            <person name="Dew I."/>
            <person name="Dietz S.M."/>
            <person name="Dodson K."/>
            <person name="Doup L.E."/>
            <person name="Downes M."/>
            <person name="Dugan-Rocha S."/>
            <person name="Dunkov B.C."/>
            <person name="Dunn P."/>
            <person name="Durbin K.J."/>
            <person name="Evangelista C.C."/>
            <person name="Ferraz C."/>
            <person name="Ferriera S."/>
            <person name="Fleischmann W."/>
            <person name="Fosler C."/>
            <person name="Gabrielian A.E."/>
            <person name="Garg N.S."/>
            <person name="Gelbart W.M."/>
            <person name="Glasser K."/>
            <person name="Glodek A."/>
            <person name="Gong F."/>
            <person name="Gorrell J.H."/>
            <person name="Gu Z."/>
            <person name="Guan P."/>
            <person name="Harris M."/>
            <person name="Harris N.L."/>
            <person name="Harvey D.A."/>
            <person name="Heiman T.J."/>
            <person name="Hernandez J.R."/>
            <person name="Houck J."/>
            <person name="Hostin D."/>
            <person name="Houston K.A."/>
            <person name="Howland T.J."/>
            <person name="Wei M.-H."/>
            <person name="Ibegwam C."/>
            <person name="Jalali M."/>
            <person name="Kalush F."/>
            <person name="Karpen G.H."/>
            <person name="Ke Z."/>
            <person name="Kennison J.A."/>
            <person name="Ketchum K.A."/>
            <person name="Kimmel B.E."/>
            <person name="Kodira C.D."/>
            <person name="Kraft C.L."/>
            <person name="Kravitz S."/>
            <person name="Kulp D."/>
            <person name="Lai Z."/>
            <person name="Lasko P."/>
            <person name="Lei Y."/>
            <person name="Levitsky A.A."/>
            <person name="Li J.H."/>
            <person name="Li Z."/>
            <person name="Liang Y."/>
            <person name="Lin X."/>
            <person name="Liu X."/>
            <person name="Mattei B."/>
            <person name="McIntosh T.C."/>
            <person name="McLeod M.P."/>
            <person name="McPherson D."/>
            <person name="Merkulov G."/>
            <person name="Milshina N.V."/>
            <person name="Mobarry C."/>
            <person name="Morris J."/>
            <person name="Moshrefi A."/>
            <person name="Mount S.M."/>
            <person name="Moy M."/>
            <person name="Murphy B."/>
            <person name="Murphy L."/>
            <person name="Muzny D.M."/>
            <person name="Nelson D.L."/>
            <person name="Nelson D.R."/>
            <person name="Nelson K.A."/>
            <person name="Nixon K."/>
            <person name="Nusskern D.R."/>
            <person name="Pacleb J.M."/>
            <person name="Palazzolo M."/>
            <person name="Pittman G.S."/>
            <person name="Pan S."/>
            <person name="Pollard J."/>
            <person name="Puri V."/>
            <person name="Reese M.G."/>
            <person name="Reinert K."/>
            <person name="Remington K."/>
            <person name="Saunders R.D.C."/>
            <person name="Scheeler F."/>
            <person name="Shen H."/>
            <person name="Shue B.C."/>
            <person name="Siden-Kiamos I."/>
            <person name="Simpson M."/>
            <person name="Skupski M.P."/>
            <person name="Smith T.J."/>
            <person name="Spier E."/>
            <person name="Spradling A.C."/>
            <person name="Stapleton M."/>
            <person name="Strong R."/>
            <person name="Sun E."/>
            <person name="Svirskas R."/>
            <person name="Tector C."/>
            <person name="Turner R."/>
            <person name="Venter E."/>
            <person name="Wang A.H."/>
            <person name="Wang X."/>
            <person name="Wang Z.-Y."/>
            <person name="Wassarman D.A."/>
            <person name="Weinstock G.M."/>
            <person name="Weissenbach J."/>
            <person name="Williams S.M."/>
            <person name="Woodage T."/>
            <person name="Worley K.C."/>
            <person name="Wu D."/>
            <person name="Yang S."/>
            <person name="Yao Q.A."/>
            <person name="Ye J."/>
            <person name="Yeh R.-F."/>
            <person name="Zaveri J.S."/>
            <person name="Zhan M."/>
            <person name="Zhang G."/>
            <person name="Zhao Q."/>
            <person name="Zheng L."/>
            <person name="Zheng X.H."/>
            <person name="Zhong F.N."/>
            <person name="Zhong W."/>
            <person name="Zhou X."/>
            <person name="Zhu S.C."/>
            <person name="Zhu X."/>
            <person name="Smith H.O."/>
            <person name="Gibbs R.A."/>
            <person name="Myers E.W."/>
            <person name="Rubin G.M."/>
            <person name="Venter J.C."/>
        </authorList>
    </citation>
    <scope>NUCLEOTIDE SEQUENCE [LARGE SCALE GENOMIC DNA]</scope>
    <source>
        <strain>Berkeley</strain>
    </source>
</reference>
<reference key="5">
    <citation type="journal article" date="2002" name="Genome Biol.">
        <title>Annotation of the Drosophila melanogaster euchromatic genome: a systematic review.</title>
        <authorList>
            <person name="Misra S."/>
            <person name="Crosby M.A."/>
            <person name="Mungall C.J."/>
            <person name="Matthews B.B."/>
            <person name="Campbell K.S."/>
            <person name="Hradecky P."/>
            <person name="Huang Y."/>
            <person name="Kaminker J.S."/>
            <person name="Millburn G.H."/>
            <person name="Prochnik S.E."/>
            <person name="Smith C.D."/>
            <person name="Tupy J.L."/>
            <person name="Whitfield E.J."/>
            <person name="Bayraktaroglu L."/>
            <person name="Berman B.P."/>
            <person name="Bettencourt B.R."/>
            <person name="Celniker S.E."/>
            <person name="de Grey A.D.N.J."/>
            <person name="Drysdale R.A."/>
            <person name="Harris N.L."/>
            <person name="Richter J."/>
            <person name="Russo S."/>
            <person name="Schroeder A.J."/>
            <person name="Shu S.Q."/>
            <person name="Stapleton M."/>
            <person name="Yamada C."/>
            <person name="Ashburner M."/>
            <person name="Gelbart W.M."/>
            <person name="Rubin G.M."/>
            <person name="Lewis S.E."/>
        </authorList>
    </citation>
    <scope>GENOME REANNOTATION</scope>
    <source>
        <strain>Berkeley</strain>
    </source>
</reference>
<reference key="6">
    <citation type="journal article" date="2002" name="Genome Biol.">
        <title>A Drosophila full-length cDNA resource.</title>
        <authorList>
            <person name="Stapleton M."/>
            <person name="Carlson J.W."/>
            <person name="Brokstein P."/>
            <person name="Yu C."/>
            <person name="Champe M."/>
            <person name="George R.A."/>
            <person name="Guarin H."/>
            <person name="Kronmiller B."/>
            <person name="Pacleb J.M."/>
            <person name="Park S."/>
            <person name="Wan K.H."/>
            <person name="Rubin G.M."/>
            <person name="Celniker S.E."/>
        </authorList>
    </citation>
    <scope>NUCLEOTIDE SEQUENCE [LARGE SCALE MRNA]</scope>
    <source>
        <strain>Berkeley</strain>
        <tissue>Embryo</tissue>
    </source>
</reference>
<reference key="7">
    <citation type="journal article" date="2008" name="J. Proteome Res.">
        <title>Phosphoproteome analysis of Drosophila melanogaster embryos.</title>
        <authorList>
            <person name="Zhai B."/>
            <person name="Villen J."/>
            <person name="Beausoleil S.A."/>
            <person name="Mintseris J."/>
            <person name="Gygi S.P."/>
        </authorList>
    </citation>
    <scope>PHOSPHORYLATION [LARGE SCALE ANALYSIS] AT THR-183 AND TYR-185</scope>
    <scope>IDENTIFICATION BY MASS SPECTROMETRY</scope>
    <source>
        <tissue>Embryo</tissue>
    </source>
</reference>
<protein>
    <recommendedName>
        <fullName evidence="6">Mitogen-activated protein kinase p38b</fullName>
        <shortName evidence="6">MAP kinase p38b</shortName>
        <shortName evidence="6">MAPK p38b</shortName>
        <ecNumber>2.7.11.24</ecNumber>
    </recommendedName>
</protein>
<sequence>MSRKMAKFYKLDINRTEWEIPETYQNLQPVGQGAYGQVCKAVVRGTSTKVAIKKLARPFQSAVHAKRTYRELRLLKHMDHENVIGLLDVFHPGQPADSLDQFQQVYMVTHLMDADLNNIIRTQKLSDDHVQFLVYQILRGLKYIHSAGVIHRDLKPSNIAVNEDCELRILDFGLARPAESEMTGYVATRWYRAPEIMLNWMHYNQTADIWSVGCIMAELLTGRTLFPGTDHIHQLNLIMEVLGTPADEFMSRISSESARNYIRSLPVMPRRNFRDIFRGANPLAIDLLEKMLELDADKRITAEQALAHPYMEKYHDPTDEQTAALYDQSFEENELPVEKWREMVFSEVTAFKPTAAFAELLPKEQ</sequence>
<proteinExistence type="evidence at protein level"/>
<organism>
    <name type="scientific">Drosophila melanogaster</name>
    <name type="common">Fruit fly</name>
    <dbReference type="NCBI Taxonomy" id="7227"/>
    <lineage>
        <taxon>Eukaryota</taxon>
        <taxon>Metazoa</taxon>
        <taxon>Ecdysozoa</taxon>
        <taxon>Arthropoda</taxon>
        <taxon>Hexapoda</taxon>
        <taxon>Insecta</taxon>
        <taxon>Pterygota</taxon>
        <taxon>Neoptera</taxon>
        <taxon>Endopterygota</taxon>
        <taxon>Diptera</taxon>
        <taxon>Brachycera</taxon>
        <taxon>Muscomorpha</taxon>
        <taxon>Ephydroidea</taxon>
        <taxon>Drosophilidae</taxon>
        <taxon>Drosophila</taxon>
        <taxon>Sophophora</taxon>
    </lineage>
</organism>
<gene>
    <name evidence="6 8" type="primary">p38b</name>
    <name evidence="8" type="ORF">CG7393</name>
</gene>
<accession>O61443</accession>
<name>MK38B_DROME</name>
<feature type="chain" id="PRO_0000186301" description="Mitogen-activated protein kinase p38b">
    <location>
        <begin position="1"/>
        <end position="365"/>
    </location>
</feature>
<feature type="domain" description="Protein kinase" evidence="2">
    <location>
        <begin position="24"/>
        <end position="311"/>
    </location>
</feature>
<feature type="short sequence motif" description="TXY">
    <location>
        <begin position="183"/>
        <end position="185"/>
    </location>
</feature>
<feature type="active site" description="Proton acceptor" evidence="2">
    <location>
        <position position="153"/>
    </location>
</feature>
<feature type="binding site" evidence="2">
    <location>
        <begin position="30"/>
        <end position="38"/>
    </location>
    <ligand>
        <name>ATP</name>
        <dbReference type="ChEBI" id="CHEBI:30616"/>
    </ligand>
</feature>
<feature type="binding site" evidence="2">
    <location>
        <position position="53"/>
    </location>
    <ligand>
        <name>ATP</name>
        <dbReference type="ChEBI" id="CHEBI:30616"/>
    </ligand>
</feature>
<feature type="modified residue" description="Phosphothreonine" evidence="4">
    <location>
        <position position="183"/>
    </location>
</feature>
<feature type="modified residue" description="Phosphotyrosine" evidence="4">
    <location>
        <position position="185"/>
    </location>
</feature>
<comment type="function">
    <text evidence="3 5">Kinase involved in dpp signal transduction pathway in the process of wing morphogenesis when the levels of dpp are enhanced or inhibited. May down-regulate insect immunity gene expression after prolonged infection.</text>
</comment>
<comment type="catalytic activity">
    <reaction>
        <text>L-seryl-[protein] + ATP = O-phospho-L-seryl-[protein] + ADP + H(+)</text>
        <dbReference type="Rhea" id="RHEA:17989"/>
        <dbReference type="Rhea" id="RHEA-COMP:9863"/>
        <dbReference type="Rhea" id="RHEA-COMP:11604"/>
        <dbReference type="ChEBI" id="CHEBI:15378"/>
        <dbReference type="ChEBI" id="CHEBI:29999"/>
        <dbReference type="ChEBI" id="CHEBI:30616"/>
        <dbReference type="ChEBI" id="CHEBI:83421"/>
        <dbReference type="ChEBI" id="CHEBI:456216"/>
        <dbReference type="EC" id="2.7.11.24"/>
    </reaction>
</comment>
<comment type="catalytic activity">
    <reaction>
        <text>L-threonyl-[protein] + ATP = O-phospho-L-threonyl-[protein] + ADP + H(+)</text>
        <dbReference type="Rhea" id="RHEA:46608"/>
        <dbReference type="Rhea" id="RHEA-COMP:11060"/>
        <dbReference type="Rhea" id="RHEA-COMP:11605"/>
        <dbReference type="ChEBI" id="CHEBI:15378"/>
        <dbReference type="ChEBI" id="CHEBI:30013"/>
        <dbReference type="ChEBI" id="CHEBI:30616"/>
        <dbReference type="ChEBI" id="CHEBI:61977"/>
        <dbReference type="ChEBI" id="CHEBI:456216"/>
        <dbReference type="EC" id="2.7.11.24"/>
    </reaction>
</comment>
<comment type="cofactor">
    <cofactor evidence="1">
        <name>Mg(2+)</name>
        <dbReference type="ChEBI" id="CHEBI:18420"/>
    </cofactor>
</comment>
<comment type="activity regulation">
    <text evidence="5">Activated by threonine and tyrosine phosphorylation by Mkk3.</text>
</comment>
<comment type="subcellular location">
    <subcellularLocation>
        <location>Nucleus</location>
    </subcellularLocation>
</comment>
<comment type="tissue specificity">
    <text>At mid-embryogenesis, highest expression is seen in developing anterior and posterior midguts. Almost ubiquitous expression throughout all development.</text>
</comment>
<comment type="developmental stage">
    <text>Expressed both maternally and zygotically in the embryo, expression seen in all developmental stages.</text>
</comment>
<comment type="domain">
    <text>The TXY motif contains the threonine and tyrosine residues whose phosphorylation activates the MAP kinases.</text>
</comment>
<comment type="PTM">
    <text evidence="1">Dually phosphorylated on Thr-183 and Tyr-185, which activates the enzyme.</text>
</comment>
<comment type="similarity">
    <text evidence="7">Belongs to the protein kinase superfamily. CMGC Ser/Thr protein kinase family. MAP kinase subfamily.</text>
</comment>
<evidence type="ECO:0000250" key="1"/>
<evidence type="ECO:0000255" key="2">
    <source>
        <dbReference type="PROSITE-ProRule" id="PRU00159"/>
    </source>
</evidence>
<evidence type="ECO:0000269" key="3">
    <source>
    </source>
</evidence>
<evidence type="ECO:0000269" key="4">
    <source>
    </source>
</evidence>
<evidence type="ECO:0000269" key="5">
    <source>
    </source>
</evidence>
<evidence type="ECO:0000303" key="6">
    <source>
    </source>
</evidence>
<evidence type="ECO:0000305" key="7"/>
<evidence type="ECO:0000312" key="8">
    <source>
        <dbReference type="FlyBase" id="FBgn0024846"/>
    </source>
</evidence>
<dbReference type="EC" id="2.7.11.24"/>
<dbReference type="EMBL" id="AF035548">
    <property type="protein sequence ID" value="AAC39032.1"/>
    <property type="molecule type" value="mRNA"/>
</dbReference>
<dbReference type="EMBL" id="AB006364">
    <property type="protein sequence ID" value="BAA35141.1"/>
    <property type="molecule type" value="mRNA"/>
</dbReference>
<dbReference type="EMBL" id="AE014134">
    <property type="protein sequence ID" value="AAF53326.1"/>
    <property type="molecule type" value="Genomic_DNA"/>
</dbReference>
<dbReference type="EMBL" id="AY058548">
    <property type="protein sequence ID" value="AAL13777.1"/>
    <property type="molecule type" value="mRNA"/>
</dbReference>
<dbReference type="RefSeq" id="NP_477361.1">
    <property type="nucleotide sequence ID" value="NM_058013.5"/>
</dbReference>
<dbReference type="SMR" id="O61443"/>
<dbReference type="BioGRID" id="60814">
    <property type="interactions" value="52"/>
</dbReference>
<dbReference type="DIP" id="DIP-22779N"/>
<dbReference type="FunCoup" id="O61443">
    <property type="interactions" value="1605"/>
</dbReference>
<dbReference type="IntAct" id="O61443">
    <property type="interactions" value="15"/>
</dbReference>
<dbReference type="STRING" id="7227.FBpp0080111"/>
<dbReference type="iPTMnet" id="O61443"/>
<dbReference type="PaxDb" id="7227-FBpp0080111"/>
<dbReference type="DNASU" id="34780"/>
<dbReference type="EnsemblMetazoa" id="FBtr0080534">
    <property type="protein sequence ID" value="FBpp0080111"/>
    <property type="gene ID" value="FBgn0024846"/>
</dbReference>
<dbReference type="GeneID" id="34780"/>
<dbReference type="KEGG" id="dme:Dmel_CG7393"/>
<dbReference type="AGR" id="FB:FBgn0024846"/>
<dbReference type="CTD" id="34780"/>
<dbReference type="FlyBase" id="FBgn0024846">
    <property type="gene designation" value="p38b"/>
</dbReference>
<dbReference type="VEuPathDB" id="VectorBase:FBgn0024846"/>
<dbReference type="eggNOG" id="KOG0660">
    <property type="taxonomic scope" value="Eukaryota"/>
</dbReference>
<dbReference type="GeneTree" id="ENSGT00940000155325"/>
<dbReference type="HOGENOM" id="CLU_000288_181_1_1"/>
<dbReference type="InParanoid" id="O61443"/>
<dbReference type="OMA" id="NRYTDLN"/>
<dbReference type="OrthoDB" id="192887at2759"/>
<dbReference type="PhylomeDB" id="O61443"/>
<dbReference type="BRENDA" id="2.7.11.24">
    <property type="organism ID" value="1994"/>
</dbReference>
<dbReference type="Reactome" id="R-DME-168638">
    <property type="pathway name" value="NOD1/2 Signaling Pathway"/>
</dbReference>
<dbReference type="Reactome" id="R-DME-171007">
    <property type="pathway name" value="p38MAPK events"/>
</dbReference>
<dbReference type="Reactome" id="R-DME-198753">
    <property type="pathway name" value="ERK/MAPK targets"/>
</dbReference>
<dbReference type="Reactome" id="R-DME-2559580">
    <property type="pathway name" value="Oxidative Stress Induced Senescence"/>
</dbReference>
<dbReference type="Reactome" id="R-DME-418592">
    <property type="pathway name" value="ADP signalling through P2Y purinoceptor 1"/>
</dbReference>
<dbReference type="Reactome" id="R-DME-432142">
    <property type="pathway name" value="Platelet sensitization by LDL"/>
</dbReference>
<dbReference type="Reactome" id="R-DME-4420097">
    <property type="pathway name" value="VEGFA-VEGFR2 Pathway"/>
</dbReference>
<dbReference type="Reactome" id="R-DME-450302">
    <property type="pathway name" value="activated TAK1 mediates p38 MAPK activation"/>
</dbReference>
<dbReference type="Reactome" id="R-DME-450341">
    <property type="pathway name" value="Activation of the AP-1 family of transcription factors"/>
</dbReference>
<dbReference type="Reactome" id="R-DME-525793">
    <property type="pathway name" value="Myogenesis"/>
</dbReference>
<dbReference type="Reactome" id="R-DME-5675221">
    <property type="pathway name" value="Negative regulation of MAPK pathway"/>
</dbReference>
<dbReference type="Reactome" id="R-DME-6798695">
    <property type="pathway name" value="Neutrophil degranulation"/>
</dbReference>
<dbReference type="Reactome" id="R-DME-9824585">
    <property type="pathway name" value="Regulation of MITF-M-dependent genes involved in pigmentation"/>
</dbReference>
<dbReference type="SignaLink" id="O61443"/>
<dbReference type="BioGRID-ORCS" id="34780">
    <property type="hits" value="0 hits in 3 CRISPR screens"/>
</dbReference>
<dbReference type="ChiTaRS" id="p38b">
    <property type="organism name" value="fly"/>
</dbReference>
<dbReference type="GenomeRNAi" id="34780"/>
<dbReference type="PRO" id="PR:O61443"/>
<dbReference type="Proteomes" id="UP000000803">
    <property type="component" value="Chromosome 2L"/>
</dbReference>
<dbReference type="Bgee" id="FBgn0024846">
    <property type="expression patterns" value="Expressed in adult Malpighian tubule (Drosophila) and 58 other cell types or tissues"/>
</dbReference>
<dbReference type="GO" id="GO:0005737">
    <property type="term" value="C:cytoplasm"/>
    <property type="evidence" value="ECO:0000318"/>
    <property type="project" value="GO_Central"/>
</dbReference>
<dbReference type="GO" id="GO:0005634">
    <property type="term" value="C:nucleus"/>
    <property type="evidence" value="ECO:0000318"/>
    <property type="project" value="GO_Central"/>
</dbReference>
<dbReference type="GO" id="GO:0005524">
    <property type="term" value="F:ATP binding"/>
    <property type="evidence" value="ECO:0007669"/>
    <property type="project" value="UniProtKB-KW"/>
</dbReference>
<dbReference type="GO" id="GO:0004707">
    <property type="term" value="F:MAP kinase activity"/>
    <property type="evidence" value="ECO:0000314"/>
    <property type="project" value="FlyBase"/>
</dbReference>
<dbReference type="GO" id="GO:0106310">
    <property type="term" value="F:protein serine kinase activity"/>
    <property type="evidence" value="ECO:0007669"/>
    <property type="project" value="RHEA"/>
</dbReference>
<dbReference type="GO" id="GO:0004674">
    <property type="term" value="F:protein serine/threonine kinase activity"/>
    <property type="evidence" value="ECO:0000314"/>
    <property type="project" value="FlyBase"/>
</dbReference>
<dbReference type="GO" id="GO:0071243">
    <property type="term" value="P:cellular response to arsenic-containing substance"/>
    <property type="evidence" value="ECO:0000314"/>
    <property type="project" value="FlyBase"/>
</dbReference>
<dbReference type="GO" id="GO:0071276">
    <property type="term" value="P:cellular response to cadmium ion"/>
    <property type="evidence" value="ECO:0000314"/>
    <property type="project" value="FlyBase"/>
</dbReference>
<dbReference type="GO" id="GO:0034614">
    <property type="term" value="P:cellular response to reactive oxygen species"/>
    <property type="evidence" value="ECO:0000314"/>
    <property type="project" value="FlyBase"/>
</dbReference>
<dbReference type="GO" id="GO:0007623">
    <property type="term" value="P:circadian rhythm"/>
    <property type="evidence" value="ECO:0000315"/>
    <property type="project" value="FlyBase"/>
</dbReference>
<dbReference type="GO" id="GO:0042742">
    <property type="term" value="P:defense response to bacterium"/>
    <property type="evidence" value="ECO:0000315"/>
    <property type="project" value="FlyBase"/>
</dbReference>
<dbReference type="GO" id="GO:0050832">
    <property type="term" value="P:defense response to fungus"/>
    <property type="evidence" value="ECO:0000315"/>
    <property type="project" value="FlyBase"/>
</dbReference>
<dbReference type="GO" id="GO:0008340">
    <property type="term" value="P:determination of adult lifespan"/>
    <property type="evidence" value="ECO:0000315"/>
    <property type="project" value="FlyBase"/>
</dbReference>
<dbReference type="GO" id="GO:0003007">
    <property type="term" value="P:heart morphogenesis"/>
    <property type="evidence" value="ECO:0000316"/>
    <property type="project" value="FlyBase"/>
</dbReference>
<dbReference type="GO" id="GO:0007476">
    <property type="term" value="P:imaginal disc-derived wing morphogenesis"/>
    <property type="evidence" value="ECO:0000314"/>
    <property type="project" value="UniProtKB"/>
</dbReference>
<dbReference type="GO" id="GO:0006955">
    <property type="term" value="P:immune response"/>
    <property type="evidence" value="ECO:0000315"/>
    <property type="project" value="FlyBase"/>
</dbReference>
<dbReference type="GO" id="GO:0035556">
    <property type="term" value="P:intracellular signal transduction"/>
    <property type="evidence" value="ECO:0000318"/>
    <property type="project" value="GO_Central"/>
</dbReference>
<dbReference type="GO" id="GO:0000165">
    <property type="term" value="P:MAPK cascade"/>
    <property type="evidence" value="ECO:0000303"/>
    <property type="project" value="FlyBase"/>
</dbReference>
<dbReference type="GO" id="GO:0035331">
    <property type="term" value="P:negative regulation of hippo signaling"/>
    <property type="evidence" value="ECO:0000315"/>
    <property type="project" value="FlyBase"/>
</dbReference>
<dbReference type="GO" id="GO:0038066">
    <property type="term" value="P:p38MAPK cascade"/>
    <property type="evidence" value="ECO:0000314"/>
    <property type="project" value="FlyBase"/>
</dbReference>
<dbReference type="GO" id="GO:0038001">
    <property type="term" value="P:paracrine signaling"/>
    <property type="evidence" value="ECO:0000316"/>
    <property type="project" value="FlyBase"/>
</dbReference>
<dbReference type="GO" id="GO:0030838">
    <property type="term" value="P:positive regulation of actin filament polymerization"/>
    <property type="evidence" value="ECO:0000316"/>
    <property type="project" value="FlyBase"/>
</dbReference>
<dbReference type="GO" id="GO:0045793">
    <property type="term" value="P:positive regulation of cell size"/>
    <property type="evidence" value="ECO:0000315"/>
    <property type="project" value="FlyBase"/>
</dbReference>
<dbReference type="GO" id="GO:0040018">
    <property type="term" value="P:positive regulation of multicellular organism growth"/>
    <property type="evidence" value="ECO:0000315"/>
    <property type="project" value="FlyBase"/>
</dbReference>
<dbReference type="GO" id="GO:0048082">
    <property type="term" value="P:regulation of adult chitin-containing cuticle pigmentation"/>
    <property type="evidence" value="ECO:0000316"/>
    <property type="project" value="FlyBase"/>
</dbReference>
<dbReference type="GO" id="GO:0030510">
    <property type="term" value="P:regulation of BMP signaling pathway"/>
    <property type="evidence" value="ECO:0000314"/>
    <property type="project" value="UniProtKB"/>
</dbReference>
<dbReference type="GO" id="GO:1900407">
    <property type="term" value="P:regulation of cellular response to oxidative stress"/>
    <property type="evidence" value="ECO:0000315"/>
    <property type="project" value="FlyBase"/>
</dbReference>
<dbReference type="GO" id="GO:0045088">
    <property type="term" value="P:regulation of innate immune response"/>
    <property type="evidence" value="ECO:0000314"/>
    <property type="project" value="UniProtKB"/>
</dbReference>
<dbReference type="GO" id="GO:2000331">
    <property type="term" value="P:regulation of terminal button organization"/>
    <property type="evidence" value="ECO:0000315"/>
    <property type="project" value="FlyBase"/>
</dbReference>
<dbReference type="GO" id="GO:0009617">
    <property type="term" value="P:response to bacterium"/>
    <property type="evidence" value="ECO:0000314"/>
    <property type="project" value="FlyBase"/>
</dbReference>
<dbReference type="GO" id="GO:0009408">
    <property type="term" value="P:response to heat"/>
    <property type="evidence" value="ECO:0000315"/>
    <property type="project" value="FlyBase"/>
</dbReference>
<dbReference type="GO" id="GO:0042542">
    <property type="term" value="P:response to hydrogen peroxide"/>
    <property type="evidence" value="ECO:0000315"/>
    <property type="project" value="FlyBase"/>
</dbReference>
<dbReference type="GO" id="GO:0009651">
    <property type="term" value="P:response to salt stress"/>
    <property type="evidence" value="ECO:0000315"/>
    <property type="project" value="FlyBase"/>
</dbReference>
<dbReference type="GO" id="GO:0042594">
    <property type="term" value="P:response to starvation"/>
    <property type="evidence" value="ECO:0000315"/>
    <property type="project" value="FlyBase"/>
</dbReference>
<dbReference type="CDD" id="cd07851">
    <property type="entry name" value="STKc_p38"/>
    <property type="match status" value="1"/>
</dbReference>
<dbReference type="FunFam" id="1.10.510.10:FF:000063">
    <property type="entry name" value="Mitogen-activated protein kinase 14"/>
    <property type="match status" value="1"/>
</dbReference>
<dbReference type="FunFam" id="3.30.200.20:FF:000769">
    <property type="entry name" value="Mitogen-activated protein kinase 14"/>
    <property type="match status" value="1"/>
</dbReference>
<dbReference type="Gene3D" id="3.30.200.20">
    <property type="entry name" value="Phosphorylase Kinase, domain 1"/>
    <property type="match status" value="1"/>
</dbReference>
<dbReference type="Gene3D" id="1.10.510.10">
    <property type="entry name" value="Transferase(Phosphotransferase) domain 1"/>
    <property type="match status" value="1"/>
</dbReference>
<dbReference type="InterPro" id="IPR011009">
    <property type="entry name" value="Kinase-like_dom_sf"/>
</dbReference>
<dbReference type="InterPro" id="IPR050117">
    <property type="entry name" value="MAP_kinase"/>
</dbReference>
<dbReference type="InterPro" id="IPR003527">
    <property type="entry name" value="MAP_kinase_CS"/>
</dbReference>
<dbReference type="InterPro" id="IPR008352">
    <property type="entry name" value="MAPK_p38-like"/>
</dbReference>
<dbReference type="InterPro" id="IPR000719">
    <property type="entry name" value="Prot_kinase_dom"/>
</dbReference>
<dbReference type="InterPro" id="IPR017441">
    <property type="entry name" value="Protein_kinase_ATP_BS"/>
</dbReference>
<dbReference type="PANTHER" id="PTHR24055">
    <property type="entry name" value="MITOGEN-ACTIVATED PROTEIN KINASE"/>
    <property type="match status" value="1"/>
</dbReference>
<dbReference type="Pfam" id="PF00069">
    <property type="entry name" value="Pkinase"/>
    <property type="match status" value="1"/>
</dbReference>
<dbReference type="PRINTS" id="PR01773">
    <property type="entry name" value="P38MAPKINASE"/>
</dbReference>
<dbReference type="SMART" id="SM00220">
    <property type="entry name" value="S_TKc"/>
    <property type="match status" value="1"/>
</dbReference>
<dbReference type="SUPFAM" id="SSF56112">
    <property type="entry name" value="Protein kinase-like (PK-like)"/>
    <property type="match status" value="1"/>
</dbReference>
<dbReference type="PROSITE" id="PS01351">
    <property type="entry name" value="MAPK"/>
    <property type="match status" value="1"/>
</dbReference>
<dbReference type="PROSITE" id="PS00107">
    <property type="entry name" value="PROTEIN_KINASE_ATP"/>
    <property type="match status" value="1"/>
</dbReference>
<dbReference type="PROSITE" id="PS50011">
    <property type="entry name" value="PROTEIN_KINASE_DOM"/>
    <property type="match status" value="1"/>
</dbReference>
<keyword id="KW-0067">ATP-binding</keyword>
<keyword id="KW-0418">Kinase</keyword>
<keyword id="KW-0547">Nucleotide-binding</keyword>
<keyword id="KW-0539">Nucleus</keyword>
<keyword id="KW-0597">Phosphoprotein</keyword>
<keyword id="KW-1185">Reference proteome</keyword>
<keyword id="KW-0723">Serine/threonine-protein kinase</keyword>
<keyword id="KW-0808">Transferase</keyword>